<proteinExistence type="inferred from homology"/>
<gene>
    <name evidence="1" type="primary">speE</name>
    <name type="ordered locus">HPG27_791</name>
</gene>
<feature type="chain" id="PRO_1000099286" description="Polyamine aminopropyltransferase">
    <location>
        <begin position="1"/>
        <end position="262"/>
    </location>
</feature>
<feature type="domain" description="PABS" evidence="1">
    <location>
        <begin position="1"/>
        <end position="249"/>
    </location>
</feature>
<feature type="active site" description="Proton acceptor" evidence="1">
    <location>
        <position position="155"/>
    </location>
</feature>
<feature type="binding site" evidence="1">
    <location>
        <position position="29"/>
    </location>
    <ligand>
        <name>S-methyl-5'-thioadenosine</name>
        <dbReference type="ChEBI" id="CHEBI:17509"/>
    </ligand>
</feature>
<feature type="binding site" evidence="1">
    <location>
        <position position="83"/>
    </location>
    <ligand>
        <name>spermidine</name>
        <dbReference type="ChEBI" id="CHEBI:57834"/>
    </ligand>
</feature>
<evidence type="ECO:0000255" key="1">
    <source>
        <dbReference type="HAMAP-Rule" id="MF_00198"/>
    </source>
</evidence>
<dbReference type="EC" id="2.5.1.16" evidence="1"/>
<dbReference type="EMBL" id="CP001173">
    <property type="protein sequence ID" value="ACI27546.1"/>
    <property type="molecule type" value="Genomic_DNA"/>
</dbReference>
<dbReference type="RefSeq" id="WP_000265100.1">
    <property type="nucleotide sequence ID" value="NC_011333.1"/>
</dbReference>
<dbReference type="SMR" id="B5Z7J7"/>
<dbReference type="KEGG" id="hpg:HPG27_791"/>
<dbReference type="HOGENOM" id="CLU_048199_0_0_7"/>
<dbReference type="UniPathway" id="UPA00248">
    <property type="reaction ID" value="UER00314"/>
</dbReference>
<dbReference type="Proteomes" id="UP000001735">
    <property type="component" value="Chromosome"/>
</dbReference>
<dbReference type="GO" id="GO:0005829">
    <property type="term" value="C:cytosol"/>
    <property type="evidence" value="ECO:0007669"/>
    <property type="project" value="TreeGrafter"/>
</dbReference>
<dbReference type="GO" id="GO:0004766">
    <property type="term" value="F:spermidine synthase activity"/>
    <property type="evidence" value="ECO:0007669"/>
    <property type="project" value="UniProtKB-UniRule"/>
</dbReference>
<dbReference type="GO" id="GO:0008295">
    <property type="term" value="P:spermidine biosynthetic process"/>
    <property type="evidence" value="ECO:0007669"/>
    <property type="project" value="UniProtKB-UniRule"/>
</dbReference>
<dbReference type="FunFam" id="3.40.50.150:FF:000466">
    <property type="entry name" value="Polyamine aminopropyltransferase"/>
    <property type="match status" value="1"/>
</dbReference>
<dbReference type="Gene3D" id="2.30.140.10">
    <property type="entry name" value="Spermidine synthase, tetramerisation domain"/>
    <property type="match status" value="1"/>
</dbReference>
<dbReference type="Gene3D" id="3.40.50.150">
    <property type="entry name" value="Vaccinia Virus protein VP39"/>
    <property type="match status" value="1"/>
</dbReference>
<dbReference type="HAMAP" id="MF_00198">
    <property type="entry name" value="Spermidine_synth"/>
    <property type="match status" value="1"/>
</dbReference>
<dbReference type="InterPro" id="IPR030374">
    <property type="entry name" value="PABS"/>
</dbReference>
<dbReference type="InterPro" id="IPR029063">
    <property type="entry name" value="SAM-dependent_MTases_sf"/>
</dbReference>
<dbReference type="InterPro" id="IPR001045">
    <property type="entry name" value="Spermi_synthase"/>
</dbReference>
<dbReference type="InterPro" id="IPR035246">
    <property type="entry name" value="Spermidine_synt_N"/>
</dbReference>
<dbReference type="InterPro" id="IPR037163">
    <property type="entry name" value="Spermidine_synt_N_sf"/>
</dbReference>
<dbReference type="NCBIfam" id="NF001811">
    <property type="entry name" value="PRK00536.1"/>
    <property type="match status" value="1"/>
</dbReference>
<dbReference type="PANTHER" id="PTHR11558:SF11">
    <property type="entry name" value="SPERMIDINE SYNTHASE"/>
    <property type="match status" value="1"/>
</dbReference>
<dbReference type="PANTHER" id="PTHR11558">
    <property type="entry name" value="SPERMIDINE/SPERMINE SYNTHASE"/>
    <property type="match status" value="1"/>
</dbReference>
<dbReference type="Pfam" id="PF17284">
    <property type="entry name" value="Spermine_synt_N"/>
    <property type="match status" value="1"/>
</dbReference>
<dbReference type="Pfam" id="PF01564">
    <property type="entry name" value="Spermine_synth"/>
    <property type="match status" value="1"/>
</dbReference>
<dbReference type="SUPFAM" id="SSF53335">
    <property type="entry name" value="S-adenosyl-L-methionine-dependent methyltransferases"/>
    <property type="match status" value="1"/>
</dbReference>
<dbReference type="PROSITE" id="PS51006">
    <property type="entry name" value="PABS_2"/>
    <property type="match status" value="1"/>
</dbReference>
<reference key="1">
    <citation type="journal article" date="2009" name="J. Bacteriol.">
        <title>The complete genome sequence of Helicobacter pylori strain G27.</title>
        <authorList>
            <person name="Baltrus D.A."/>
            <person name="Amieva M.R."/>
            <person name="Covacci A."/>
            <person name="Lowe T.M."/>
            <person name="Merrell D.S."/>
            <person name="Ottemann K.M."/>
            <person name="Stein M."/>
            <person name="Salama N.R."/>
            <person name="Guillemin K."/>
        </authorList>
    </citation>
    <scope>NUCLEOTIDE SEQUENCE [LARGE SCALE GENOMIC DNA]</scope>
    <source>
        <strain>G27</strain>
    </source>
</reference>
<accession>B5Z7J7</accession>
<comment type="function">
    <text evidence="1">Catalyzes the irreversible transfer of a propylamine group from the amino donor S-adenosylmethioninamine (decarboxy-AdoMet) to putrescine (1,4-diaminobutane) to yield spermidine.</text>
</comment>
<comment type="catalytic activity">
    <reaction evidence="1">
        <text>S-adenosyl 3-(methylsulfanyl)propylamine + putrescine = S-methyl-5'-thioadenosine + spermidine + H(+)</text>
        <dbReference type="Rhea" id="RHEA:12721"/>
        <dbReference type="ChEBI" id="CHEBI:15378"/>
        <dbReference type="ChEBI" id="CHEBI:17509"/>
        <dbReference type="ChEBI" id="CHEBI:57443"/>
        <dbReference type="ChEBI" id="CHEBI:57834"/>
        <dbReference type="ChEBI" id="CHEBI:326268"/>
        <dbReference type="EC" id="2.5.1.16"/>
    </reaction>
</comment>
<comment type="pathway">
    <text evidence="1">Amine and polyamine biosynthesis; spermidine biosynthesis; spermidine from putrescine: step 1/1.</text>
</comment>
<comment type="subunit">
    <text evidence="1">Homodimer or homotetramer.</text>
</comment>
<comment type="subcellular location">
    <subcellularLocation>
        <location evidence="1">Cytoplasm</location>
    </subcellularLocation>
</comment>
<comment type="similarity">
    <text evidence="1">Belongs to the spermidine/spermine synthase family.</text>
</comment>
<name>SPEE_HELPG</name>
<organism>
    <name type="scientific">Helicobacter pylori (strain G27)</name>
    <dbReference type="NCBI Taxonomy" id="563041"/>
    <lineage>
        <taxon>Bacteria</taxon>
        <taxon>Pseudomonadati</taxon>
        <taxon>Campylobacterota</taxon>
        <taxon>Epsilonproteobacteria</taxon>
        <taxon>Campylobacterales</taxon>
        <taxon>Helicobacteraceae</taxon>
        <taxon>Helicobacter</taxon>
    </lineage>
</organism>
<keyword id="KW-0963">Cytoplasm</keyword>
<keyword id="KW-0620">Polyamine biosynthesis</keyword>
<keyword id="KW-1185">Reference proteome</keyword>
<keyword id="KW-0745">Spermidine biosynthesis</keyword>
<keyword id="KW-0808">Transferase</keyword>
<sequence>MWITQEITPYLRKEYTIEAKLLDVRSEHNILEIFKSKDFGEIAMLNRQLLFKNFLHIESELLAHMGGCTKKELKEVLIVDGFDLELAHQLFKYDTHIDFVQADEKILDSFISFFPHFHEVKNNKNFTHAKQLLDLDIKKYDLILCLQEPDIHKIDGLKRMLKEDGVFISVAKHPLLEHVSMQNALKNLGDFFAVAMPFVAPLRILSNKGYIYASFKTHPLKDLMAPKIEALTSVRYYNEDIHRAAFALPKNLQEVFKDNIKS</sequence>
<protein>
    <recommendedName>
        <fullName evidence="1">Polyamine aminopropyltransferase</fullName>
    </recommendedName>
    <alternativeName>
        <fullName evidence="1">Putrescine aminopropyltransferase</fullName>
        <shortName evidence="1">PAPT</shortName>
    </alternativeName>
    <alternativeName>
        <fullName evidence="1">Spermidine synthase</fullName>
        <shortName evidence="1">SPDS</shortName>
        <shortName evidence="1">SPDSY</shortName>
        <ecNumber evidence="1">2.5.1.16</ecNumber>
    </alternativeName>
</protein>